<gene>
    <name type="primary">AKAP11</name>
    <name type="synonym">AKAP220</name>
    <name type="synonym">KIAA0629</name>
</gene>
<proteinExistence type="evidence at protein level"/>
<comment type="function">
    <text>Binds to type II regulatory subunits of protein kinase A and anchors/targets them.</text>
</comment>
<comment type="interaction">
    <interactant intactId="EBI-1049491">
        <id>Q9UKA4</id>
    </interactant>
    <interactant intactId="EBI-11173743">
        <id>O60741</id>
        <label>HCN1</label>
    </interactant>
    <organismsDiffer>false</organismsDiffer>
    <experiments>2</experiments>
</comment>
<comment type="interaction">
    <interactant intactId="EBI-1049491">
        <id>Q9UKA4</id>
    </interactant>
    <interactant intactId="EBI-725647">
        <id>Q99732</id>
        <label>LITAF</label>
    </interactant>
    <organismsDiffer>false</organismsDiffer>
    <experiments>3</experiments>
</comment>
<comment type="subcellular location">
    <subcellularLocation>
        <location>Cytoplasm</location>
    </subcellularLocation>
    <subcellularLocation>
        <location>Cytoplasm</location>
        <location>Cytoskeleton</location>
        <location>Microtubule organizing center</location>
        <location>Centrosome</location>
    </subcellularLocation>
    <text>Cytoplasmic in premeiotic pachytene spermatocytes and in the centrosome of developing postmeiotic germ cells, while a midpiece/centrosome localization was found in elongating spermatocytes and mature sperm.</text>
</comment>
<comment type="tissue specificity">
    <text>Expressed in heart, brain, lung, liver, kidney, testis and ovary. Weakly expressed in skeletal muscle, pancreas and spleen.</text>
</comment>
<comment type="domain">
    <text>RII-alpha binding site, predicted to form an amphipathic helix, could participate in protein-protein interactions with a complementary surface on the R-subunit dimer.</text>
</comment>
<comment type="similarity">
    <text evidence="3">Belongs to the AKAP110 family.</text>
</comment>
<comment type="sequence caution" evidence="3">
    <conflict type="erroneous initiation">
        <sequence resource="EMBL-CDS" id="BAA92117"/>
    </conflict>
</comment>
<evidence type="ECO:0000250" key="1">
    <source>
        <dbReference type="UniProtKB" id="Q62924"/>
    </source>
</evidence>
<evidence type="ECO:0000256" key="2">
    <source>
        <dbReference type="SAM" id="MobiDB-lite"/>
    </source>
</evidence>
<evidence type="ECO:0000305" key="3"/>
<evidence type="ECO:0007744" key="4">
    <source>
    </source>
</evidence>
<evidence type="ECO:0007744" key="5">
    <source>
    </source>
</evidence>
<evidence type="ECO:0007744" key="6">
    <source>
    </source>
</evidence>
<evidence type="ECO:0007744" key="7">
    <source>
    </source>
</evidence>
<evidence type="ECO:0007744" key="8">
    <source>
    </source>
</evidence>
<dbReference type="EMBL" id="AF176555">
    <property type="protein sequence ID" value="AAF07045.1"/>
    <property type="molecule type" value="mRNA"/>
</dbReference>
<dbReference type="EMBL" id="AL136527">
    <property type="status" value="NOT_ANNOTATED_CDS"/>
    <property type="molecule type" value="Genomic_DNA"/>
</dbReference>
<dbReference type="EMBL" id="AB014529">
    <property type="protein sequence ID" value="BAA31604.2"/>
    <property type="molecule type" value="mRNA"/>
</dbReference>
<dbReference type="EMBL" id="AK002166">
    <property type="protein sequence ID" value="BAA92117.1"/>
    <property type="status" value="ALT_INIT"/>
    <property type="molecule type" value="mRNA"/>
</dbReference>
<dbReference type="CCDS" id="CCDS9383.1"/>
<dbReference type="PIR" id="T00384">
    <property type="entry name" value="T00384"/>
</dbReference>
<dbReference type="RefSeq" id="NP_057332.1">
    <property type="nucleotide sequence ID" value="NM_016248.4"/>
</dbReference>
<dbReference type="RefSeq" id="XP_011533205.1">
    <property type="nucleotide sequence ID" value="XM_011534903.3"/>
</dbReference>
<dbReference type="RefSeq" id="XP_011533206.1">
    <property type="nucleotide sequence ID" value="XM_011534904.2"/>
</dbReference>
<dbReference type="RefSeq" id="XP_011533207.1">
    <property type="nucleotide sequence ID" value="XM_011534905.2"/>
</dbReference>
<dbReference type="RefSeq" id="XP_011533208.1">
    <property type="nucleotide sequence ID" value="XM_011534906.3"/>
</dbReference>
<dbReference type="RefSeq" id="XP_016875870.1">
    <property type="nucleotide sequence ID" value="XM_017020381.3"/>
</dbReference>
<dbReference type="RefSeq" id="XP_054230038.1">
    <property type="nucleotide sequence ID" value="XM_054374063.1"/>
</dbReference>
<dbReference type="RefSeq" id="XP_054230039.1">
    <property type="nucleotide sequence ID" value="XM_054374064.1"/>
</dbReference>
<dbReference type="RefSeq" id="XP_054230040.1">
    <property type="nucleotide sequence ID" value="XM_054374065.1"/>
</dbReference>
<dbReference type="RefSeq" id="XP_054230041.1">
    <property type="nucleotide sequence ID" value="XM_054374066.1"/>
</dbReference>
<dbReference type="RefSeq" id="XP_054230042.1">
    <property type="nucleotide sequence ID" value="XM_054374067.1"/>
</dbReference>
<dbReference type="BioGRID" id="116384">
    <property type="interactions" value="109"/>
</dbReference>
<dbReference type="FunCoup" id="Q9UKA4">
    <property type="interactions" value="3169"/>
</dbReference>
<dbReference type="IntAct" id="Q9UKA4">
    <property type="interactions" value="88"/>
</dbReference>
<dbReference type="MINT" id="Q9UKA4"/>
<dbReference type="STRING" id="9606.ENSP00000025301"/>
<dbReference type="GlyConnect" id="999">
    <property type="glycosylation" value="1 N-Linked glycan (1 site)"/>
</dbReference>
<dbReference type="GlyCosmos" id="Q9UKA4">
    <property type="glycosylation" value="20 sites, 3 glycans"/>
</dbReference>
<dbReference type="GlyGen" id="Q9UKA4">
    <property type="glycosylation" value="22 sites, 1 N-linked glycan (1 site), 2 O-linked glycans (20 sites)"/>
</dbReference>
<dbReference type="iPTMnet" id="Q9UKA4"/>
<dbReference type="PhosphoSitePlus" id="Q9UKA4"/>
<dbReference type="BioMuta" id="AKAP11"/>
<dbReference type="DMDM" id="13431310"/>
<dbReference type="jPOST" id="Q9UKA4"/>
<dbReference type="MassIVE" id="Q9UKA4"/>
<dbReference type="PaxDb" id="9606-ENSP00000025301"/>
<dbReference type="PeptideAtlas" id="Q9UKA4"/>
<dbReference type="ProteomicsDB" id="84751"/>
<dbReference type="Pumba" id="Q9UKA4"/>
<dbReference type="Antibodypedia" id="23478">
    <property type="antibodies" value="60 antibodies from 19 providers"/>
</dbReference>
<dbReference type="DNASU" id="11215"/>
<dbReference type="Ensembl" id="ENST00000025301.4">
    <property type="protein sequence ID" value="ENSP00000025301.2"/>
    <property type="gene ID" value="ENSG00000023516.9"/>
</dbReference>
<dbReference type="GeneID" id="11215"/>
<dbReference type="KEGG" id="hsa:11215"/>
<dbReference type="MANE-Select" id="ENST00000025301.4">
    <property type="protein sequence ID" value="ENSP00000025301.2"/>
    <property type="RefSeq nucleotide sequence ID" value="NM_016248.4"/>
    <property type="RefSeq protein sequence ID" value="NP_057332.1"/>
</dbReference>
<dbReference type="UCSC" id="uc001uys.2">
    <property type="organism name" value="human"/>
</dbReference>
<dbReference type="AGR" id="HGNC:369"/>
<dbReference type="CTD" id="11215"/>
<dbReference type="DisGeNET" id="11215"/>
<dbReference type="GeneCards" id="AKAP11"/>
<dbReference type="HGNC" id="HGNC:369">
    <property type="gene designation" value="AKAP11"/>
</dbReference>
<dbReference type="HPA" id="ENSG00000023516">
    <property type="expression patterns" value="Low tissue specificity"/>
</dbReference>
<dbReference type="MIM" id="604696">
    <property type="type" value="gene"/>
</dbReference>
<dbReference type="neXtProt" id="NX_Q9UKA4"/>
<dbReference type="OpenTargets" id="ENSG00000023516"/>
<dbReference type="PharmGKB" id="PA24663"/>
<dbReference type="VEuPathDB" id="HostDB:ENSG00000023516"/>
<dbReference type="eggNOG" id="ENOG502QRN4">
    <property type="taxonomic scope" value="Eukaryota"/>
</dbReference>
<dbReference type="GeneTree" id="ENSGT00940000153313"/>
<dbReference type="HOGENOM" id="CLU_002178_0_0_1"/>
<dbReference type="InParanoid" id="Q9UKA4"/>
<dbReference type="OMA" id="GPLNQSQ"/>
<dbReference type="OrthoDB" id="9943913at2759"/>
<dbReference type="PAN-GO" id="Q9UKA4">
    <property type="GO annotations" value="3 GO annotations based on evolutionary models"/>
</dbReference>
<dbReference type="PhylomeDB" id="Q9UKA4"/>
<dbReference type="TreeFam" id="TF343800"/>
<dbReference type="PathwayCommons" id="Q9UKA4"/>
<dbReference type="SignaLink" id="Q9UKA4"/>
<dbReference type="SIGNOR" id="Q9UKA4"/>
<dbReference type="BioGRID-ORCS" id="11215">
    <property type="hits" value="5 hits in 1169 CRISPR screens"/>
</dbReference>
<dbReference type="CD-CODE" id="8C2F96ED">
    <property type="entry name" value="Centrosome"/>
</dbReference>
<dbReference type="ChiTaRS" id="AKAP11">
    <property type="organism name" value="human"/>
</dbReference>
<dbReference type="GeneWiki" id="AKAP11"/>
<dbReference type="GenomeRNAi" id="11215"/>
<dbReference type="Pharos" id="Q9UKA4">
    <property type="development level" value="Tbio"/>
</dbReference>
<dbReference type="PRO" id="PR:Q9UKA4"/>
<dbReference type="Proteomes" id="UP000005640">
    <property type="component" value="Chromosome 13"/>
</dbReference>
<dbReference type="RNAct" id="Q9UKA4">
    <property type="molecule type" value="protein"/>
</dbReference>
<dbReference type="Bgee" id="ENSG00000023516">
    <property type="expression patterns" value="Expressed in Brodmann (1909) area 46 and 211 other cell types or tissues"/>
</dbReference>
<dbReference type="GO" id="GO:0005813">
    <property type="term" value="C:centrosome"/>
    <property type="evidence" value="ECO:0007669"/>
    <property type="project" value="UniProtKB-SubCell"/>
</dbReference>
<dbReference type="GO" id="GO:0005737">
    <property type="term" value="C:cytoplasm"/>
    <property type="evidence" value="ECO:0000318"/>
    <property type="project" value="GO_Central"/>
</dbReference>
<dbReference type="GO" id="GO:0005829">
    <property type="term" value="C:cytosol"/>
    <property type="evidence" value="ECO:0000314"/>
    <property type="project" value="HPA"/>
</dbReference>
<dbReference type="GO" id="GO:0005730">
    <property type="term" value="C:nucleolus"/>
    <property type="evidence" value="ECO:0000314"/>
    <property type="project" value="HPA"/>
</dbReference>
<dbReference type="GO" id="GO:0005886">
    <property type="term" value="C:plasma membrane"/>
    <property type="evidence" value="ECO:0000314"/>
    <property type="project" value="HPA"/>
</dbReference>
<dbReference type="GO" id="GO:0051018">
    <property type="term" value="F:protein kinase A binding"/>
    <property type="evidence" value="ECO:0000318"/>
    <property type="project" value="GO_Central"/>
</dbReference>
<dbReference type="GO" id="GO:0034237">
    <property type="term" value="F:protein kinase A regulatory subunit binding"/>
    <property type="evidence" value="ECO:0007669"/>
    <property type="project" value="Ensembl"/>
</dbReference>
<dbReference type="GO" id="GO:0008157">
    <property type="term" value="F:protein phosphatase 1 binding"/>
    <property type="evidence" value="ECO:0000304"/>
    <property type="project" value="ProtInc"/>
</dbReference>
<dbReference type="GO" id="GO:0030866">
    <property type="term" value="P:cortical actin cytoskeleton organization"/>
    <property type="evidence" value="ECO:0007669"/>
    <property type="project" value="Ensembl"/>
</dbReference>
<dbReference type="GO" id="GO:0035556">
    <property type="term" value="P:intracellular signal transduction"/>
    <property type="evidence" value="ECO:0000304"/>
    <property type="project" value="ProtInc"/>
</dbReference>
<dbReference type="GO" id="GO:0008104">
    <property type="term" value="P:protein localization"/>
    <property type="evidence" value="ECO:0000318"/>
    <property type="project" value="GO_Central"/>
</dbReference>
<dbReference type="GO" id="GO:0036010">
    <property type="term" value="P:protein localization to endosome"/>
    <property type="evidence" value="ECO:0007669"/>
    <property type="project" value="Ensembl"/>
</dbReference>
<dbReference type="GO" id="GO:0003091">
    <property type="term" value="P:renal water homeostasis"/>
    <property type="evidence" value="ECO:0007669"/>
    <property type="project" value="Ensembl"/>
</dbReference>
<dbReference type="InterPro" id="IPR008382">
    <property type="entry name" value="SPHK1-interactor_AKAP_110"/>
</dbReference>
<dbReference type="PANTHER" id="PTHR10226">
    <property type="entry name" value="A KINASE ANCHOR PROTEIN"/>
    <property type="match status" value="1"/>
</dbReference>
<dbReference type="PANTHER" id="PTHR10226:SF3">
    <property type="entry name" value="A-KINASE ANCHOR PROTEIN 11"/>
    <property type="match status" value="1"/>
</dbReference>
<accession>Q9UKA4</accession>
<accession>O75124</accession>
<accession>Q9NUK7</accession>
<organism>
    <name type="scientific">Homo sapiens</name>
    <name type="common">Human</name>
    <dbReference type="NCBI Taxonomy" id="9606"/>
    <lineage>
        <taxon>Eukaryota</taxon>
        <taxon>Metazoa</taxon>
        <taxon>Chordata</taxon>
        <taxon>Craniata</taxon>
        <taxon>Vertebrata</taxon>
        <taxon>Euteleostomi</taxon>
        <taxon>Mammalia</taxon>
        <taxon>Eutheria</taxon>
        <taxon>Euarchontoglires</taxon>
        <taxon>Primates</taxon>
        <taxon>Haplorrhini</taxon>
        <taxon>Catarrhini</taxon>
        <taxon>Hominidae</taxon>
        <taxon>Homo</taxon>
    </lineage>
</organism>
<keyword id="KW-0963">Cytoplasm</keyword>
<keyword id="KW-0206">Cytoskeleton</keyword>
<keyword id="KW-0597">Phosphoprotein</keyword>
<keyword id="KW-1267">Proteomics identification</keyword>
<keyword id="KW-1185">Reference proteome</keyword>
<sequence>MATFRNNHMKTKASVRKSFSEDVFQSVKSLLQSQKELCSVTAEDCLQQDEHANLTEVTFLGFNEETDAAHIQDLAAVSLELPDILNSLHFCSLNENEIICMKNINKPLDISSDPLNQSHPSGMLCVMRVSPTSPRLRIDFIFSLLSKYATGIRYTLDTFLHQKHQLETTDEDDDDTNQSVSSIEDDFVTAFEHLEEEETSKPYNDGMNITVLRSQCDAASQTVTGHHLETHDLKILISSGQQKSLAKPSTSSVNVLGHKELPSVKTSVTTSISEPWTQRSFYRSSNASDKDSDLQKTFFSSSPAYSSESECSSPSPVIFLDEEGYQKSLKAKLELPKIPVMKDDIEDSDSEVSEFFDSFDQFDELEQTLETCLFNKDPVIGKSSQRKGHKHGKSCMNPQKFKFDRPALPANVRKPTPRKPESPYGNLCDAPDSPRPVKASREDSGLFSPIRSSAFSPLGGCTPAECFCQTDIGGDRIHENHDSVYYTYEDYAKSISCEVLGSVLRTHHTNTLSNINSIKHGENKTVTFKHGNLDQKNKSKNKSLMIKDSIQKFAADLVEKSFGSAFKDLQKGVSSCTNALYHLAIKLTSSVLQMAFDELRRQRAFSLKERAISGLANFLVSEALSNALKDLQYVKKQIFTNTVARFAADLAEELVFEGIMEVCQFSYPQTPASPQCGSFDFEDKVVKLYAKDLSESVIQEAFIELSQVDVTFTTKAAVSVSTDNIKYVSAESVVPSTQAVTFSPSFHNQAIMVTKPVQEYKKEYTVQQALFCTSGIVTSIPVPLAGSALLPYHISSTACQAKAHLSSDDSNSNGDSAQVHIATKNREEKAACLRNICLPSEHNPGNQNDFKPTNDDIEMQSSSKLPNDPAIISNFSAAVVHTIVNETLESMTSLEVTKMVDERTDYLTKSLKEKTPPFSHCDQAVLQCSEASSNKDMFADRLSKSIIKHSIDKSKSVIPNIDKNAVYKESLPVSGEESQLTPEKSPKFPDSQNQLTHCSLSAAKDCVPECKVSMVHGSSLETLPSCPAVTGQKSDLKESAKDQPLKKHNLNSTSLEALSFGQENPFPHSHTFSSTALTCVDGLHVEDKQKVRDRNVIPDTPPSTPLVPSRASSEWDIKKLTKKLKGELAKEFAPATPPSTPHNSSVGSLSENEQNTIEKEEFMLKLMRSLSEEVESSESGELPEVDVKSEHSGKKVQFAEALATHILSLATEMAASHLDNKIIQEPKVKNPCLNVQSQRSVSPTFLNPSDENLKTLCNFAGDLAAEVITEAEKIAKVRNCMLFKQKKNSCYADGDEDYKVEEKLDIEAVVHPREVDPFILSLPPSSCMSGLMYKYPSCESVTDEYAGHLIQILKQEGGNSELIMDQYANRLAYRSVKSGLQEAAKTTKVQCNSRMFPVPSSQVKTNKELLMFSNKEHHQEADKKRQSKRNEGYFCKNQTCERTLDPYRNEVSQLYSFSTSLVHSITKDAKEELTASLVGLPKSLTDSCLFEKSGYEEDNECHVTPELPKSLQPSSQNHRFYHSTGSLNGYGCGDNVVQAVEQYAKKVVDDTLELTLGSTVFRVSETTKSADRVTYAEKLSPLTGQACRYCDLKELHNCTGNSSQHFFRQGSLASSKPASNPKFSSRYQKSRIFHLSVPQIHVNLDKKAVLAEKIVAEAIEKAERELSSTSLAADSGIGQEGASFAESLATETMTAAVTNVGHAVSSSKEIEDFQSTESVSSQQMNLSIGDDSTGSWSNLSFEDEHQDESSSFHHLSESNGNSSSWSSLGLEGDLYEDNLSFPTSDSDGPDDKDEEHEDEVEGLGQDGKTLLITNIDMEPCTVDPQLRIILQWLIASEAEVAELYFHDSANKEFMLLSKQLQEKGWKVGDLLQAVLQYYEVMEKASSEERCKSLFDWLLENA</sequence>
<name>AKA11_HUMAN</name>
<reference key="1">
    <citation type="journal article" date="2000" name="Dev. Biol.">
        <title>Localization of a novel human A-kinase-anchoring protein, hAKAP220, during spermatogenesis.</title>
        <authorList>
            <person name="Reinton N."/>
            <person name="Collas P."/>
            <person name="Haugen T.B."/>
            <person name="Skalhegg B.S."/>
            <person name="Hansson V."/>
            <person name="Jahnsen T."/>
            <person name="Tasken K."/>
        </authorList>
    </citation>
    <scope>NUCLEOTIDE SEQUENCE [MRNA]</scope>
</reference>
<reference key="2">
    <citation type="journal article" date="2004" name="Nature">
        <title>The DNA sequence and analysis of human chromosome 13.</title>
        <authorList>
            <person name="Dunham A."/>
            <person name="Matthews L.H."/>
            <person name="Burton J."/>
            <person name="Ashurst J.L."/>
            <person name="Howe K.L."/>
            <person name="Ashcroft K.J."/>
            <person name="Beare D.M."/>
            <person name="Burford D.C."/>
            <person name="Hunt S.E."/>
            <person name="Griffiths-Jones S."/>
            <person name="Jones M.C."/>
            <person name="Keenan S.J."/>
            <person name="Oliver K."/>
            <person name="Scott C.E."/>
            <person name="Ainscough R."/>
            <person name="Almeida J.P."/>
            <person name="Ambrose K.D."/>
            <person name="Andrews D.T."/>
            <person name="Ashwell R.I.S."/>
            <person name="Babbage A.K."/>
            <person name="Bagguley C.L."/>
            <person name="Bailey J."/>
            <person name="Bannerjee R."/>
            <person name="Barlow K.F."/>
            <person name="Bates K."/>
            <person name="Beasley H."/>
            <person name="Bird C.P."/>
            <person name="Bray-Allen S."/>
            <person name="Brown A.J."/>
            <person name="Brown J.Y."/>
            <person name="Burrill W."/>
            <person name="Carder C."/>
            <person name="Carter N.P."/>
            <person name="Chapman J.C."/>
            <person name="Clamp M.E."/>
            <person name="Clark S.Y."/>
            <person name="Clarke G."/>
            <person name="Clee C.M."/>
            <person name="Clegg S.C."/>
            <person name="Cobley V."/>
            <person name="Collins J.E."/>
            <person name="Corby N."/>
            <person name="Coville G.J."/>
            <person name="Deloukas P."/>
            <person name="Dhami P."/>
            <person name="Dunham I."/>
            <person name="Dunn M."/>
            <person name="Earthrowl M.E."/>
            <person name="Ellington A.G."/>
            <person name="Faulkner L."/>
            <person name="Frankish A.G."/>
            <person name="Frankland J."/>
            <person name="French L."/>
            <person name="Garner P."/>
            <person name="Garnett J."/>
            <person name="Gilbert J.G.R."/>
            <person name="Gilson C.J."/>
            <person name="Ghori J."/>
            <person name="Grafham D.V."/>
            <person name="Gribble S.M."/>
            <person name="Griffiths C."/>
            <person name="Hall R.E."/>
            <person name="Hammond S."/>
            <person name="Harley J.L."/>
            <person name="Hart E.A."/>
            <person name="Heath P.D."/>
            <person name="Howden P.J."/>
            <person name="Huckle E.J."/>
            <person name="Hunt P.J."/>
            <person name="Hunt A.R."/>
            <person name="Johnson C."/>
            <person name="Johnson D."/>
            <person name="Kay M."/>
            <person name="Kimberley A.M."/>
            <person name="King A."/>
            <person name="Laird G.K."/>
            <person name="Langford C.J."/>
            <person name="Lawlor S."/>
            <person name="Leongamornlert D.A."/>
            <person name="Lloyd D.M."/>
            <person name="Lloyd C."/>
            <person name="Loveland J.E."/>
            <person name="Lovell J."/>
            <person name="Martin S."/>
            <person name="Mashreghi-Mohammadi M."/>
            <person name="McLaren S.J."/>
            <person name="McMurray A."/>
            <person name="Milne S."/>
            <person name="Moore M.J.F."/>
            <person name="Nickerson T."/>
            <person name="Palmer S.A."/>
            <person name="Pearce A.V."/>
            <person name="Peck A.I."/>
            <person name="Pelan S."/>
            <person name="Phillimore B."/>
            <person name="Porter K.M."/>
            <person name="Rice C.M."/>
            <person name="Searle S."/>
            <person name="Sehra H.K."/>
            <person name="Shownkeen R."/>
            <person name="Skuce C.D."/>
            <person name="Smith M."/>
            <person name="Steward C.A."/>
            <person name="Sycamore N."/>
            <person name="Tester J."/>
            <person name="Thomas D.W."/>
            <person name="Tracey A."/>
            <person name="Tromans A."/>
            <person name="Tubby B."/>
            <person name="Wall M."/>
            <person name="Wallis J.M."/>
            <person name="West A.P."/>
            <person name="Whitehead S.L."/>
            <person name="Willey D.L."/>
            <person name="Wilming L."/>
            <person name="Wray P.W."/>
            <person name="Wright M.W."/>
            <person name="Young L."/>
            <person name="Coulson A."/>
            <person name="Durbin R.M."/>
            <person name="Hubbard T."/>
            <person name="Sulston J.E."/>
            <person name="Beck S."/>
            <person name="Bentley D.R."/>
            <person name="Rogers J."/>
            <person name="Ross M.T."/>
        </authorList>
    </citation>
    <scope>NUCLEOTIDE SEQUENCE [LARGE SCALE GENOMIC DNA]</scope>
</reference>
<reference key="3">
    <citation type="journal article" date="1998" name="DNA Res.">
        <title>Prediction of the coding sequences of unidentified human genes. X. The complete sequences of 100 new cDNA clones from brain which can code for large proteins in vitro.</title>
        <authorList>
            <person name="Ishikawa K."/>
            <person name="Nagase T."/>
            <person name="Suyama M."/>
            <person name="Miyajima N."/>
            <person name="Tanaka A."/>
            <person name="Kotani H."/>
            <person name="Nomura N."/>
            <person name="Ohara O."/>
        </authorList>
    </citation>
    <scope>NUCLEOTIDE SEQUENCE [LARGE SCALE MRNA] OF 630-1901</scope>
    <source>
        <tissue>Brain</tissue>
    </source>
</reference>
<reference key="4">
    <citation type="journal article" date="2002" name="DNA Res.">
        <title>Construction of expression-ready cDNA clones for KIAA genes: manual curation of 330 KIAA cDNA clones.</title>
        <authorList>
            <person name="Nakajima D."/>
            <person name="Okazaki N."/>
            <person name="Yamakawa H."/>
            <person name="Kikuno R."/>
            <person name="Ohara O."/>
            <person name="Nagase T."/>
        </authorList>
    </citation>
    <scope>SEQUENCE REVISION</scope>
</reference>
<reference key="5">
    <citation type="journal article" date="2004" name="Nat. Genet.">
        <title>Complete sequencing and characterization of 21,243 full-length human cDNAs.</title>
        <authorList>
            <person name="Ota T."/>
            <person name="Suzuki Y."/>
            <person name="Nishikawa T."/>
            <person name="Otsuki T."/>
            <person name="Sugiyama T."/>
            <person name="Irie R."/>
            <person name="Wakamatsu A."/>
            <person name="Hayashi K."/>
            <person name="Sato H."/>
            <person name="Nagai K."/>
            <person name="Kimura K."/>
            <person name="Makita H."/>
            <person name="Sekine M."/>
            <person name="Obayashi M."/>
            <person name="Nishi T."/>
            <person name="Shibahara T."/>
            <person name="Tanaka T."/>
            <person name="Ishii S."/>
            <person name="Yamamoto J."/>
            <person name="Saito K."/>
            <person name="Kawai Y."/>
            <person name="Isono Y."/>
            <person name="Nakamura Y."/>
            <person name="Nagahari K."/>
            <person name="Murakami K."/>
            <person name="Yasuda T."/>
            <person name="Iwayanagi T."/>
            <person name="Wagatsuma M."/>
            <person name="Shiratori A."/>
            <person name="Sudo H."/>
            <person name="Hosoiri T."/>
            <person name="Kaku Y."/>
            <person name="Kodaira H."/>
            <person name="Kondo H."/>
            <person name="Sugawara M."/>
            <person name="Takahashi M."/>
            <person name="Kanda K."/>
            <person name="Yokoi T."/>
            <person name="Furuya T."/>
            <person name="Kikkawa E."/>
            <person name="Omura Y."/>
            <person name="Abe K."/>
            <person name="Kamihara K."/>
            <person name="Katsuta N."/>
            <person name="Sato K."/>
            <person name="Tanikawa M."/>
            <person name="Yamazaki M."/>
            <person name="Ninomiya K."/>
            <person name="Ishibashi T."/>
            <person name="Yamashita H."/>
            <person name="Murakawa K."/>
            <person name="Fujimori K."/>
            <person name="Tanai H."/>
            <person name="Kimata M."/>
            <person name="Watanabe M."/>
            <person name="Hiraoka S."/>
            <person name="Chiba Y."/>
            <person name="Ishida S."/>
            <person name="Ono Y."/>
            <person name="Takiguchi S."/>
            <person name="Watanabe S."/>
            <person name="Yosida M."/>
            <person name="Hotuta T."/>
            <person name="Kusano J."/>
            <person name="Kanehori K."/>
            <person name="Takahashi-Fujii A."/>
            <person name="Hara H."/>
            <person name="Tanase T.-O."/>
            <person name="Nomura Y."/>
            <person name="Togiya S."/>
            <person name="Komai F."/>
            <person name="Hara R."/>
            <person name="Takeuchi K."/>
            <person name="Arita M."/>
            <person name="Imose N."/>
            <person name="Musashino K."/>
            <person name="Yuuki H."/>
            <person name="Oshima A."/>
            <person name="Sasaki N."/>
            <person name="Aotsuka S."/>
            <person name="Yoshikawa Y."/>
            <person name="Matsunawa H."/>
            <person name="Ichihara T."/>
            <person name="Shiohata N."/>
            <person name="Sano S."/>
            <person name="Moriya S."/>
            <person name="Momiyama H."/>
            <person name="Satoh N."/>
            <person name="Takami S."/>
            <person name="Terashima Y."/>
            <person name="Suzuki O."/>
            <person name="Nakagawa S."/>
            <person name="Senoh A."/>
            <person name="Mizoguchi H."/>
            <person name="Goto Y."/>
            <person name="Shimizu F."/>
            <person name="Wakebe H."/>
            <person name="Hishigaki H."/>
            <person name="Watanabe T."/>
            <person name="Sugiyama A."/>
            <person name="Takemoto M."/>
            <person name="Kawakami B."/>
            <person name="Yamazaki M."/>
            <person name="Watanabe K."/>
            <person name="Kumagai A."/>
            <person name="Itakura S."/>
            <person name="Fukuzumi Y."/>
            <person name="Fujimori Y."/>
            <person name="Komiyama M."/>
            <person name="Tashiro H."/>
            <person name="Tanigami A."/>
            <person name="Fujiwara T."/>
            <person name="Ono T."/>
            <person name="Yamada K."/>
            <person name="Fujii Y."/>
            <person name="Ozaki K."/>
            <person name="Hirao M."/>
            <person name="Ohmori Y."/>
            <person name="Kawabata A."/>
            <person name="Hikiji T."/>
            <person name="Kobatake N."/>
            <person name="Inagaki H."/>
            <person name="Ikema Y."/>
            <person name="Okamoto S."/>
            <person name="Okitani R."/>
            <person name="Kawakami T."/>
            <person name="Noguchi S."/>
            <person name="Itoh T."/>
            <person name="Shigeta K."/>
            <person name="Senba T."/>
            <person name="Matsumura K."/>
            <person name="Nakajima Y."/>
            <person name="Mizuno T."/>
            <person name="Morinaga M."/>
            <person name="Sasaki M."/>
            <person name="Togashi T."/>
            <person name="Oyama M."/>
            <person name="Hata H."/>
            <person name="Watanabe M."/>
            <person name="Komatsu T."/>
            <person name="Mizushima-Sugano J."/>
            <person name="Satoh T."/>
            <person name="Shirai Y."/>
            <person name="Takahashi Y."/>
            <person name="Nakagawa K."/>
            <person name="Okumura K."/>
            <person name="Nagase T."/>
            <person name="Nomura N."/>
            <person name="Kikuchi H."/>
            <person name="Masuho Y."/>
            <person name="Yamashita R."/>
            <person name="Nakai K."/>
            <person name="Yada T."/>
            <person name="Nakamura Y."/>
            <person name="Ohara O."/>
            <person name="Isogai T."/>
            <person name="Sugano S."/>
        </authorList>
    </citation>
    <scope>NUCLEOTIDE SEQUENCE [LARGE SCALE MRNA] OF 1121-1469</scope>
    <source>
        <tissue>Placenta</tissue>
    </source>
</reference>
<reference key="6">
    <citation type="journal article" date="2006" name="Cell">
        <title>Global, in vivo, and site-specific phosphorylation dynamics in signaling networks.</title>
        <authorList>
            <person name="Olsen J.V."/>
            <person name="Blagoev B."/>
            <person name="Gnad F."/>
            <person name="Macek B."/>
            <person name="Kumar C."/>
            <person name="Mortensen P."/>
            <person name="Mann M."/>
        </authorList>
    </citation>
    <scope>IDENTIFICATION BY MASS SPECTROMETRY [LARGE SCALE ANALYSIS]</scope>
    <source>
        <tissue>Cervix carcinoma</tissue>
    </source>
</reference>
<reference key="7">
    <citation type="journal article" date="2008" name="Mol. Cell">
        <title>Kinase-selective enrichment enables quantitative phosphoproteomics of the kinome across the cell cycle.</title>
        <authorList>
            <person name="Daub H."/>
            <person name="Olsen J.V."/>
            <person name="Bairlein M."/>
            <person name="Gnad F."/>
            <person name="Oppermann F.S."/>
            <person name="Korner R."/>
            <person name="Greff Z."/>
            <person name="Keri G."/>
            <person name="Stemmann O."/>
            <person name="Mann M."/>
        </authorList>
    </citation>
    <scope>IDENTIFICATION BY MASS SPECTROMETRY [LARGE SCALE ANALYSIS]</scope>
    <source>
        <tissue>Cervix carcinoma</tissue>
    </source>
</reference>
<reference key="8">
    <citation type="journal article" date="2008" name="Proc. Natl. Acad. Sci. U.S.A.">
        <title>A quantitative atlas of mitotic phosphorylation.</title>
        <authorList>
            <person name="Dephoure N."/>
            <person name="Zhou C."/>
            <person name="Villen J."/>
            <person name="Beausoleil S.A."/>
            <person name="Bakalarski C.E."/>
            <person name="Elledge S.J."/>
            <person name="Gygi S.P."/>
        </authorList>
    </citation>
    <scope>PHOSPHORYLATION [LARGE SCALE ANALYSIS] AT SER-422; SER-433; SER-448; THR-1100 AND SER-1337</scope>
    <scope>IDENTIFICATION BY MASS SPECTROMETRY [LARGE SCALE ANALYSIS]</scope>
    <source>
        <tissue>Cervix carcinoma</tissue>
    </source>
</reference>
<reference key="9">
    <citation type="journal article" date="2009" name="Mol. Cell. Proteomics">
        <title>Large-scale proteomics analysis of the human kinome.</title>
        <authorList>
            <person name="Oppermann F.S."/>
            <person name="Gnad F."/>
            <person name="Olsen J.V."/>
            <person name="Hornberger R."/>
            <person name="Greff Z."/>
            <person name="Keri G."/>
            <person name="Mann M."/>
            <person name="Daub H."/>
        </authorList>
    </citation>
    <scope>PHOSPHORYLATION [LARGE SCALE ANALYSIS] AT SER-448 AND THR-1100</scope>
    <scope>IDENTIFICATION BY MASS SPECTROMETRY [LARGE SCALE ANALYSIS]</scope>
</reference>
<reference key="10">
    <citation type="journal article" date="2009" name="Sci. Signal.">
        <title>Quantitative phosphoproteomic analysis of T cell receptor signaling reveals system-wide modulation of protein-protein interactions.</title>
        <authorList>
            <person name="Mayya V."/>
            <person name="Lundgren D.H."/>
            <person name="Hwang S.-I."/>
            <person name="Rezaul K."/>
            <person name="Wu L."/>
            <person name="Eng J.K."/>
            <person name="Rodionov V."/>
            <person name="Han D.K."/>
        </authorList>
    </citation>
    <scope>PHOSPHORYLATION [LARGE SCALE ANALYSIS] AT SER-18; SER-433; THR-1100 AND SER-1242</scope>
    <scope>IDENTIFICATION BY MASS SPECTROMETRY [LARGE SCALE ANALYSIS]</scope>
    <source>
        <tissue>Leukemic T-cell</tissue>
    </source>
</reference>
<reference key="11">
    <citation type="journal article" date="2011" name="Sci. Signal.">
        <title>System-wide temporal characterization of the proteome and phosphoproteome of human embryonic stem cell differentiation.</title>
        <authorList>
            <person name="Rigbolt K.T."/>
            <person name="Prokhorova T.A."/>
            <person name="Akimov V."/>
            <person name="Henningsen J."/>
            <person name="Johansen P.T."/>
            <person name="Kratchmarova I."/>
            <person name="Kassem M."/>
            <person name="Mann M."/>
            <person name="Olsen J.V."/>
            <person name="Blagoev B."/>
        </authorList>
    </citation>
    <scope>PHOSPHORYLATION [LARGE SCALE ANALYSIS] AT SER-18</scope>
    <scope>IDENTIFICATION BY MASS SPECTROMETRY [LARGE SCALE ANALYSIS]</scope>
</reference>
<reference key="12">
    <citation type="journal article" date="2013" name="J. Proteome Res.">
        <title>Toward a comprehensive characterization of a human cancer cell phosphoproteome.</title>
        <authorList>
            <person name="Zhou H."/>
            <person name="Di Palma S."/>
            <person name="Preisinger C."/>
            <person name="Peng M."/>
            <person name="Polat A.N."/>
            <person name="Heck A.J."/>
            <person name="Mohammed S."/>
        </authorList>
    </citation>
    <scope>PHOSPHORYLATION [LARGE SCALE ANALYSIS] AT SER-18; SER-444; SER-448; THR-981; THR-1100; SER-1171; SER-1242; THR-1485 AND SER-1580</scope>
    <scope>IDENTIFICATION BY MASS SPECTROMETRY [LARGE SCALE ANALYSIS]</scope>
    <source>
        <tissue>Cervix carcinoma</tissue>
        <tissue>Erythroleukemia</tissue>
    </source>
</reference>
<reference key="13">
    <citation type="journal article" date="2014" name="J. Proteomics">
        <title>An enzyme assisted RP-RPLC approach for in-depth analysis of human liver phosphoproteome.</title>
        <authorList>
            <person name="Bian Y."/>
            <person name="Song C."/>
            <person name="Cheng K."/>
            <person name="Dong M."/>
            <person name="Wang F."/>
            <person name="Huang J."/>
            <person name="Sun D."/>
            <person name="Wang L."/>
            <person name="Ye M."/>
            <person name="Zou H."/>
        </authorList>
    </citation>
    <scope>IDENTIFICATION BY MASS SPECTROMETRY [LARGE SCALE ANALYSIS]</scope>
    <source>
        <tissue>Liver</tissue>
    </source>
</reference>
<feature type="chain" id="PRO_0000064517" description="A-kinase anchor protein 11">
    <location>
        <begin position="1"/>
        <end position="1901"/>
    </location>
</feature>
<feature type="region of interest" description="Disordered" evidence="2">
    <location>
        <begin position="407"/>
        <end position="443"/>
    </location>
</feature>
<feature type="region of interest" description="Disordered" evidence="2">
    <location>
        <begin position="843"/>
        <end position="864"/>
    </location>
</feature>
<feature type="region of interest" description="Disordered" evidence="2">
    <location>
        <begin position="971"/>
        <end position="993"/>
    </location>
</feature>
<feature type="region of interest" description="Disordered" evidence="2">
    <location>
        <begin position="1131"/>
        <end position="1153"/>
    </location>
</feature>
<feature type="region of interest" description="PKA-RII subunit binding domain">
    <location>
        <begin position="1650"/>
        <end position="1663"/>
    </location>
</feature>
<feature type="region of interest" description="Disordered" evidence="2">
    <location>
        <begin position="1708"/>
        <end position="1805"/>
    </location>
</feature>
<feature type="compositionally biased region" description="Polar residues" evidence="2">
    <location>
        <begin position="1141"/>
        <end position="1153"/>
    </location>
</feature>
<feature type="compositionally biased region" description="Polar residues" evidence="2">
    <location>
        <begin position="1713"/>
        <end position="1740"/>
    </location>
</feature>
<feature type="compositionally biased region" description="Basic and acidic residues" evidence="2">
    <location>
        <begin position="1747"/>
        <end position="1756"/>
    </location>
</feature>
<feature type="compositionally biased region" description="Low complexity" evidence="2">
    <location>
        <begin position="1757"/>
        <end position="1772"/>
    </location>
</feature>
<feature type="compositionally biased region" description="Acidic residues" evidence="2">
    <location>
        <begin position="1787"/>
        <end position="1801"/>
    </location>
</feature>
<feature type="modified residue" description="Phosphoserine" evidence="6 7 8">
    <location>
        <position position="18"/>
    </location>
</feature>
<feature type="modified residue" description="Phosphoserine" evidence="4">
    <location>
        <position position="422"/>
    </location>
</feature>
<feature type="modified residue" description="Phosphoserine" evidence="4 6">
    <location>
        <position position="433"/>
    </location>
</feature>
<feature type="modified residue" description="Phosphoserine" evidence="8">
    <location>
        <position position="444"/>
    </location>
</feature>
<feature type="modified residue" description="Phosphoserine" evidence="4 5 8">
    <location>
        <position position="448"/>
    </location>
</feature>
<feature type="modified residue" description="Phosphothreonine" evidence="8">
    <location>
        <position position="981"/>
    </location>
</feature>
<feature type="modified residue" description="Phosphothreonine" evidence="4 5 6 8">
    <location>
        <position position="1100"/>
    </location>
</feature>
<feature type="modified residue" description="Phosphoserine" evidence="8">
    <location>
        <position position="1171"/>
    </location>
</feature>
<feature type="modified residue" description="Phosphoserine" evidence="1">
    <location>
        <position position="1176"/>
    </location>
</feature>
<feature type="modified residue" description="Phosphoserine" evidence="1">
    <location>
        <position position="1177"/>
    </location>
</feature>
<feature type="modified residue" description="Phosphoserine" evidence="6 8">
    <location>
        <position position="1242"/>
    </location>
</feature>
<feature type="modified residue" description="Phosphoserine" evidence="4">
    <location>
        <position position="1337"/>
    </location>
</feature>
<feature type="modified residue" description="Phosphothreonine" evidence="8">
    <location>
        <position position="1485"/>
    </location>
</feature>
<feature type="modified residue" description="Phosphoserine" evidence="8">
    <location>
        <position position="1580"/>
    </location>
</feature>
<feature type="sequence variant" id="VAR_020131" description="In dbSNP:rs2236364.">
    <original>S</original>
    <variation>C</variation>
    <location>
        <position position="721"/>
    </location>
</feature>
<feature type="sequence variant" id="VAR_048207" description="In dbSNP:rs17063163.">
    <original>H</original>
    <variation>R</variation>
    <location>
        <position position="1070"/>
    </location>
</feature>
<feature type="sequence variant" id="VAR_048208" description="In dbSNP:rs17063167.">
    <original>L</original>
    <variation>F</variation>
    <location>
        <position position="1410"/>
    </location>
</feature>
<feature type="sequence conflict" description="In Ref. 5; BAA92117." evidence="3" ref="5">
    <original>K</original>
    <variation>R</variation>
    <location>
        <position position="1303"/>
    </location>
</feature>
<feature type="sequence conflict" description="In Ref. 5; BAA92117." evidence="3" ref="5">
    <original>LDPYRNEVSQLYSFSTSLVHSITKDA</original>
    <variation>CGPSVELSPWKWQTRCGREGNSWKRE</variation>
    <location>
        <begin position="1444"/>
        <end position="1469"/>
    </location>
</feature>
<protein>
    <recommendedName>
        <fullName>A-kinase anchor protein 11</fullName>
        <shortName>AKAP-11</shortName>
    </recommendedName>
    <alternativeName>
        <fullName>A-kinase anchor protein 220 kDa</fullName>
        <shortName>AKAP 220</shortName>
        <shortName>hAKAP220</shortName>
    </alternativeName>
    <alternativeName>
        <fullName>Protein kinase A-anchoring protein 11</fullName>
        <shortName>PRKA11</shortName>
    </alternativeName>
</protein>